<comment type="catalytic activity">
    <reaction evidence="1">
        <text>tRNA(Gly) + glycine + ATP = glycyl-tRNA(Gly) + AMP + diphosphate</text>
        <dbReference type="Rhea" id="RHEA:16013"/>
        <dbReference type="Rhea" id="RHEA-COMP:9664"/>
        <dbReference type="Rhea" id="RHEA-COMP:9683"/>
        <dbReference type="ChEBI" id="CHEBI:30616"/>
        <dbReference type="ChEBI" id="CHEBI:33019"/>
        <dbReference type="ChEBI" id="CHEBI:57305"/>
        <dbReference type="ChEBI" id="CHEBI:78442"/>
        <dbReference type="ChEBI" id="CHEBI:78522"/>
        <dbReference type="ChEBI" id="CHEBI:456215"/>
        <dbReference type="EC" id="6.1.1.14"/>
    </reaction>
</comment>
<comment type="subunit">
    <text evidence="1">Tetramer of two alpha and two beta subunits.</text>
</comment>
<comment type="subcellular location">
    <subcellularLocation>
        <location evidence="1">Cytoplasm</location>
    </subcellularLocation>
</comment>
<comment type="similarity">
    <text evidence="1">Belongs to the class-II aminoacyl-tRNA synthetase family.</text>
</comment>
<feature type="chain" id="PRO_1000101370" description="Glycine--tRNA ligase beta subunit">
    <location>
        <begin position="1"/>
        <end position="688"/>
    </location>
</feature>
<name>SYGB_ALIFM</name>
<proteinExistence type="inferred from homology"/>
<dbReference type="EC" id="6.1.1.14" evidence="1"/>
<dbReference type="EMBL" id="CP001139">
    <property type="protein sequence ID" value="ACH65158.1"/>
    <property type="molecule type" value="Genomic_DNA"/>
</dbReference>
<dbReference type="RefSeq" id="WP_012532856.1">
    <property type="nucleotide sequence ID" value="NC_011184.1"/>
</dbReference>
<dbReference type="SMR" id="B5FEW0"/>
<dbReference type="KEGG" id="vfm:VFMJ11_0016"/>
<dbReference type="HOGENOM" id="CLU_007220_2_2_6"/>
<dbReference type="Proteomes" id="UP000001857">
    <property type="component" value="Chromosome I"/>
</dbReference>
<dbReference type="GO" id="GO:0005829">
    <property type="term" value="C:cytosol"/>
    <property type="evidence" value="ECO:0007669"/>
    <property type="project" value="TreeGrafter"/>
</dbReference>
<dbReference type="GO" id="GO:0004814">
    <property type="term" value="F:arginine-tRNA ligase activity"/>
    <property type="evidence" value="ECO:0007669"/>
    <property type="project" value="InterPro"/>
</dbReference>
<dbReference type="GO" id="GO:0005524">
    <property type="term" value="F:ATP binding"/>
    <property type="evidence" value="ECO:0007669"/>
    <property type="project" value="UniProtKB-UniRule"/>
</dbReference>
<dbReference type="GO" id="GO:0004820">
    <property type="term" value="F:glycine-tRNA ligase activity"/>
    <property type="evidence" value="ECO:0007669"/>
    <property type="project" value="UniProtKB-UniRule"/>
</dbReference>
<dbReference type="GO" id="GO:0006420">
    <property type="term" value="P:arginyl-tRNA aminoacylation"/>
    <property type="evidence" value="ECO:0007669"/>
    <property type="project" value="InterPro"/>
</dbReference>
<dbReference type="GO" id="GO:0006426">
    <property type="term" value="P:glycyl-tRNA aminoacylation"/>
    <property type="evidence" value="ECO:0007669"/>
    <property type="project" value="UniProtKB-UniRule"/>
</dbReference>
<dbReference type="HAMAP" id="MF_00255">
    <property type="entry name" value="Gly_tRNA_synth_beta"/>
    <property type="match status" value="1"/>
</dbReference>
<dbReference type="InterPro" id="IPR008909">
    <property type="entry name" value="DALR_anticod-bd"/>
</dbReference>
<dbReference type="InterPro" id="IPR015944">
    <property type="entry name" value="Gly-tRNA-synth_bsu"/>
</dbReference>
<dbReference type="InterPro" id="IPR006194">
    <property type="entry name" value="Gly-tRNA-synth_heterodimer"/>
</dbReference>
<dbReference type="NCBIfam" id="TIGR00211">
    <property type="entry name" value="glyS"/>
    <property type="match status" value="1"/>
</dbReference>
<dbReference type="PANTHER" id="PTHR30075:SF2">
    <property type="entry name" value="GLYCINE--TRNA LIGASE, CHLOROPLASTIC_MITOCHONDRIAL 2"/>
    <property type="match status" value="1"/>
</dbReference>
<dbReference type="PANTHER" id="PTHR30075">
    <property type="entry name" value="GLYCYL-TRNA SYNTHETASE"/>
    <property type="match status" value="1"/>
</dbReference>
<dbReference type="Pfam" id="PF05746">
    <property type="entry name" value="DALR_1"/>
    <property type="match status" value="1"/>
</dbReference>
<dbReference type="Pfam" id="PF02092">
    <property type="entry name" value="tRNA_synt_2f"/>
    <property type="match status" value="1"/>
</dbReference>
<dbReference type="PRINTS" id="PR01045">
    <property type="entry name" value="TRNASYNTHGB"/>
</dbReference>
<dbReference type="SMART" id="SM00836">
    <property type="entry name" value="DALR_1"/>
    <property type="match status" value="1"/>
</dbReference>
<dbReference type="SUPFAM" id="SSF109604">
    <property type="entry name" value="HD-domain/PDEase-like"/>
    <property type="match status" value="1"/>
</dbReference>
<dbReference type="PROSITE" id="PS50861">
    <property type="entry name" value="AA_TRNA_LIGASE_II_GLYAB"/>
    <property type="match status" value="1"/>
</dbReference>
<keyword id="KW-0030">Aminoacyl-tRNA synthetase</keyword>
<keyword id="KW-0067">ATP-binding</keyword>
<keyword id="KW-0963">Cytoplasm</keyword>
<keyword id="KW-0436">Ligase</keyword>
<keyword id="KW-0547">Nucleotide-binding</keyword>
<keyword id="KW-0648">Protein biosynthesis</keyword>
<evidence type="ECO:0000255" key="1">
    <source>
        <dbReference type="HAMAP-Rule" id="MF_00255"/>
    </source>
</evidence>
<reference key="1">
    <citation type="submission" date="2008-08" db="EMBL/GenBank/DDBJ databases">
        <title>Complete sequence of Vibrio fischeri strain MJ11.</title>
        <authorList>
            <person name="Mandel M.J."/>
            <person name="Stabb E.V."/>
            <person name="Ruby E.G."/>
            <person name="Ferriera S."/>
            <person name="Johnson J."/>
            <person name="Kravitz S."/>
            <person name="Beeson K."/>
            <person name="Sutton G."/>
            <person name="Rogers Y.-H."/>
            <person name="Friedman R."/>
            <person name="Frazier M."/>
            <person name="Venter J.C."/>
        </authorList>
    </citation>
    <scope>NUCLEOTIDE SEQUENCE [LARGE SCALE GENOMIC DNA]</scope>
    <source>
        <strain>MJ11</strain>
    </source>
</reference>
<gene>
    <name evidence="1" type="primary">glyS</name>
    <name type="ordered locus">VFMJ11_0016</name>
</gene>
<sequence>MAKNFLIELGTEELPPTALRSLAEAFASNFEAELKAADLAHQGVKWYATPRRLALKVAELAESQADKVVEKRGPAVSAAFDADGNPTKAAQGWARGNGITVEQAERLKTDKGEWLLHKEEVKGKPVQELVVDFAAKALAGLPIPKAMRWGNSDIQFIRPVKTLTILLGDELIEGSILGVSSARTLRGHRFMGESEFTIDSADQYPAILEERGKVMADYDARKAIILADSEKAAAAVGGKADLEDDLVEEVTSLVEWPVVLTAKFEEEFLKVPSEALVYTMKGDQKYFPVYDENKKLLPNFIFVSNIESKEPRHVIEGNEKVVRPRLADAEFFFNTDRKRPLIDRLPELEQAIFQKQLGTIKDKTDRITELAGYIAEQIGADVEKSQRAGLLAKCDLMTSMVFEFTDTQGVMGMHYATHDGEDEQVALALYEQYMPRFAGDDLPSTDISASVAMADKLDTLVGIFGIGQAPKGSDPFALRRAALGVLRIIVEKEYNLDLVDLVAKAQSLFGDKLSNANVATDVIDFMLGRFRAWYQDEGFSVDIIQAVLARRPTKPADFDKRVKAVSHFRELDAAESLAAANKRVGNILAKFDGELAQEIDLALLQEDAEKALAEKVEILAEALEPVFAAGNYQEALSRLAELREPVDAFFDNVMVMADDEALKTNRLTLLNKLRNLFLDIADISLLQK</sequence>
<accession>B5FEW0</accession>
<protein>
    <recommendedName>
        <fullName evidence="1">Glycine--tRNA ligase beta subunit</fullName>
        <ecNumber evidence="1">6.1.1.14</ecNumber>
    </recommendedName>
    <alternativeName>
        <fullName evidence="1">Glycyl-tRNA synthetase beta subunit</fullName>
        <shortName evidence="1">GlyRS</shortName>
    </alternativeName>
</protein>
<organism>
    <name type="scientific">Aliivibrio fischeri (strain MJ11)</name>
    <name type="common">Vibrio fischeri</name>
    <dbReference type="NCBI Taxonomy" id="388396"/>
    <lineage>
        <taxon>Bacteria</taxon>
        <taxon>Pseudomonadati</taxon>
        <taxon>Pseudomonadota</taxon>
        <taxon>Gammaproteobacteria</taxon>
        <taxon>Vibrionales</taxon>
        <taxon>Vibrionaceae</taxon>
        <taxon>Aliivibrio</taxon>
    </lineage>
</organism>